<keyword id="KW-0030">Aminoacyl-tRNA synthetase</keyword>
<keyword id="KW-0067">ATP-binding</keyword>
<keyword id="KW-0963">Cytoplasm</keyword>
<keyword id="KW-0436">Ligase</keyword>
<keyword id="KW-0479">Metal-binding</keyword>
<keyword id="KW-0547">Nucleotide-binding</keyword>
<keyword id="KW-0648">Protein biosynthesis</keyword>
<keyword id="KW-0862">Zinc</keyword>
<comment type="function">
    <text evidence="1">Catalyzes the attachment of glutamate to tRNA(Glu) in a two-step reaction: glutamate is first activated by ATP to form Glu-AMP and then transferred to the acceptor end of tRNA(Glu).</text>
</comment>
<comment type="catalytic activity">
    <reaction evidence="1">
        <text>tRNA(Glu) + L-glutamate + ATP = L-glutamyl-tRNA(Glu) + AMP + diphosphate</text>
        <dbReference type="Rhea" id="RHEA:23540"/>
        <dbReference type="Rhea" id="RHEA-COMP:9663"/>
        <dbReference type="Rhea" id="RHEA-COMP:9680"/>
        <dbReference type="ChEBI" id="CHEBI:29985"/>
        <dbReference type="ChEBI" id="CHEBI:30616"/>
        <dbReference type="ChEBI" id="CHEBI:33019"/>
        <dbReference type="ChEBI" id="CHEBI:78442"/>
        <dbReference type="ChEBI" id="CHEBI:78520"/>
        <dbReference type="ChEBI" id="CHEBI:456215"/>
        <dbReference type="EC" id="6.1.1.17"/>
    </reaction>
</comment>
<comment type="cofactor">
    <cofactor evidence="1">
        <name>Zn(2+)</name>
        <dbReference type="ChEBI" id="CHEBI:29105"/>
    </cofactor>
    <text evidence="1">Binds 1 zinc ion per subunit.</text>
</comment>
<comment type="subunit">
    <text evidence="1">Monomer.</text>
</comment>
<comment type="subcellular location">
    <subcellularLocation>
        <location evidence="1">Cytoplasm</location>
    </subcellularLocation>
</comment>
<comment type="similarity">
    <text evidence="1">Belongs to the class-I aminoacyl-tRNA synthetase family. Glutamate--tRNA ligase type 1 subfamily.</text>
</comment>
<dbReference type="EC" id="6.1.1.17" evidence="1"/>
<dbReference type="EMBL" id="CP000243">
    <property type="protein sequence ID" value="ABE08195.1"/>
    <property type="molecule type" value="Genomic_DNA"/>
</dbReference>
<dbReference type="RefSeq" id="WP_000695661.1">
    <property type="nucleotide sequence ID" value="NZ_CP064825.1"/>
</dbReference>
<dbReference type="SMR" id="Q1R8W9"/>
<dbReference type="KEGG" id="eci:UTI89_C2731"/>
<dbReference type="HOGENOM" id="CLU_015768_6_0_6"/>
<dbReference type="Proteomes" id="UP000001952">
    <property type="component" value="Chromosome"/>
</dbReference>
<dbReference type="GO" id="GO:0005829">
    <property type="term" value="C:cytosol"/>
    <property type="evidence" value="ECO:0007669"/>
    <property type="project" value="TreeGrafter"/>
</dbReference>
<dbReference type="GO" id="GO:0005524">
    <property type="term" value="F:ATP binding"/>
    <property type="evidence" value="ECO:0007669"/>
    <property type="project" value="UniProtKB-UniRule"/>
</dbReference>
<dbReference type="GO" id="GO:0004818">
    <property type="term" value="F:glutamate-tRNA ligase activity"/>
    <property type="evidence" value="ECO:0007669"/>
    <property type="project" value="UniProtKB-UniRule"/>
</dbReference>
<dbReference type="GO" id="GO:0000049">
    <property type="term" value="F:tRNA binding"/>
    <property type="evidence" value="ECO:0007669"/>
    <property type="project" value="InterPro"/>
</dbReference>
<dbReference type="GO" id="GO:0008270">
    <property type="term" value="F:zinc ion binding"/>
    <property type="evidence" value="ECO:0007669"/>
    <property type="project" value="UniProtKB-UniRule"/>
</dbReference>
<dbReference type="GO" id="GO:0006424">
    <property type="term" value="P:glutamyl-tRNA aminoacylation"/>
    <property type="evidence" value="ECO:0007669"/>
    <property type="project" value="UniProtKB-UniRule"/>
</dbReference>
<dbReference type="CDD" id="cd00808">
    <property type="entry name" value="GluRS_core"/>
    <property type="match status" value="1"/>
</dbReference>
<dbReference type="FunFam" id="1.10.10.350:FF:000001">
    <property type="entry name" value="Glutamate--tRNA ligase"/>
    <property type="match status" value="1"/>
</dbReference>
<dbReference type="FunFam" id="3.40.50.620:FF:000007">
    <property type="entry name" value="Glutamate--tRNA ligase"/>
    <property type="match status" value="1"/>
</dbReference>
<dbReference type="Gene3D" id="1.10.10.350">
    <property type="match status" value="1"/>
</dbReference>
<dbReference type="Gene3D" id="3.40.50.620">
    <property type="entry name" value="HUPs"/>
    <property type="match status" value="1"/>
</dbReference>
<dbReference type="HAMAP" id="MF_00022">
    <property type="entry name" value="Glu_tRNA_synth_type1"/>
    <property type="match status" value="1"/>
</dbReference>
<dbReference type="InterPro" id="IPR045462">
    <property type="entry name" value="aa-tRNA-synth_I_cd-bd"/>
</dbReference>
<dbReference type="InterPro" id="IPR020751">
    <property type="entry name" value="aa-tRNA-synth_I_codon-bd_sub2"/>
</dbReference>
<dbReference type="InterPro" id="IPR001412">
    <property type="entry name" value="aa-tRNA-synth_I_CS"/>
</dbReference>
<dbReference type="InterPro" id="IPR008925">
    <property type="entry name" value="aa_tRNA-synth_I_cd-bd_sf"/>
</dbReference>
<dbReference type="InterPro" id="IPR004527">
    <property type="entry name" value="Glu-tRNA-ligase_bac/mito"/>
</dbReference>
<dbReference type="InterPro" id="IPR000924">
    <property type="entry name" value="Glu/Gln-tRNA-synth"/>
</dbReference>
<dbReference type="InterPro" id="IPR020058">
    <property type="entry name" value="Glu/Gln-tRNA-synth_Ib_cat-dom"/>
</dbReference>
<dbReference type="InterPro" id="IPR049940">
    <property type="entry name" value="GluQ/Sye"/>
</dbReference>
<dbReference type="InterPro" id="IPR033910">
    <property type="entry name" value="GluRS_core"/>
</dbReference>
<dbReference type="InterPro" id="IPR014729">
    <property type="entry name" value="Rossmann-like_a/b/a_fold"/>
</dbReference>
<dbReference type="NCBIfam" id="TIGR00464">
    <property type="entry name" value="gltX_bact"/>
    <property type="match status" value="1"/>
</dbReference>
<dbReference type="PANTHER" id="PTHR43311">
    <property type="entry name" value="GLUTAMATE--TRNA LIGASE"/>
    <property type="match status" value="1"/>
</dbReference>
<dbReference type="PANTHER" id="PTHR43311:SF2">
    <property type="entry name" value="GLUTAMATE--TRNA LIGASE, MITOCHONDRIAL-RELATED"/>
    <property type="match status" value="1"/>
</dbReference>
<dbReference type="Pfam" id="PF19269">
    <property type="entry name" value="Anticodon_2"/>
    <property type="match status" value="1"/>
</dbReference>
<dbReference type="Pfam" id="PF00749">
    <property type="entry name" value="tRNA-synt_1c"/>
    <property type="match status" value="1"/>
</dbReference>
<dbReference type="PRINTS" id="PR00987">
    <property type="entry name" value="TRNASYNTHGLU"/>
</dbReference>
<dbReference type="SUPFAM" id="SSF48163">
    <property type="entry name" value="An anticodon-binding domain of class I aminoacyl-tRNA synthetases"/>
    <property type="match status" value="1"/>
</dbReference>
<dbReference type="SUPFAM" id="SSF52374">
    <property type="entry name" value="Nucleotidylyl transferase"/>
    <property type="match status" value="1"/>
</dbReference>
<dbReference type="PROSITE" id="PS00178">
    <property type="entry name" value="AA_TRNA_LIGASE_I"/>
    <property type="match status" value="1"/>
</dbReference>
<name>SYE_ECOUT</name>
<evidence type="ECO:0000255" key="1">
    <source>
        <dbReference type="HAMAP-Rule" id="MF_00022"/>
    </source>
</evidence>
<reference key="1">
    <citation type="journal article" date="2006" name="Proc. Natl. Acad. Sci. U.S.A.">
        <title>Identification of genes subject to positive selection in uropathogenic strains of Escherichia coli: a comparative genomics approach.</title>
        <authorList>
            <person name="Chen S.L."/>
            <person name="Hung C.-S."/>
            <person name="Xu J."/>
            <person name="Reigstad C.S."/>
            <person name="Magrini V."/>
            <person name="Sabo A."/>
            <person name="Blasiar D."/>
            <person name="Bieri T."/>
            <person name="Meyer R.R."/>
            <person name="Ozersky P."/>
            <person name="Armstrong J.R."/>
            <person name="Fulton R.S."/>
            <person name="Latreille J.P."/>
            <person name="Spieth J."/>
            <person name="Hooton T.M."/>
            <person name="Mardis E.R."/>
            <person name="Hultgren S.J."/>
            <person name="Gordon J.I."/>
        </authorList>
    </citation>
    <scope>NUCLEOTIDE SEQUENCE [LARGE SCALE GENOMIC DNA]</scope>
    <source>
        <strain>UTI89 / UPEC</strain>
    </source>
</reference>
<feature type="chain" id="PRO_1000001897" description="Glutamate--tRNA ligase">
    <location>
        <begin position="1"/>
        <end position="471"/>
    </location>
</feature>
<feature type="short sequence motif" description="'HIGH' region" evidence="1">
    <location>
        <begin position="9"/>
        <end position="19"/>
    </location>
</feature>
<feature type="short sequence motif" description="'KMSKS' region" evidence="1">
    <location>
        <begin position="237"/>
        <end position="241"/>
    </location>
</feature>
<feature type="binding site" evidence="1">
    <location>
        <position position="98"/>
    </location>
    <ligand>
        <name>Zn(2+)</name>
        <dbReference type="ChEBI" id="CHEBI:29105"/>
    </ligand>
</feature>
<feature type="binding site" evidence="1">
    <location>
        <position position="100"/>
    </location>
    <ligand>
        <name>Zn(2+)</name>
        <dbReference type="ChEBI" id="CHEBI:29105"/>
    </ligand>
</feature>
<feature type="binding site" evidence="1">
    <location>
        <position position="125"/>
    </location>
    <ligand>
        <name>Zn(2+)</name>
        <dbReference type="ChEBI" id="CHEBI:29105"/>
    </ligand>
</feature>
<feature type="binding site" evidence="1">
    <location>
        <position position="127"/>
    </location>
    <ligand>
        <name>Zn(2+)</name>
        <dbReference type="ChEBI" id="CHEBI:29105"/>
    </ligand>
</feature>
<feature type="binding site" evidence="1">
    <location>
        <position position="240"/>
    </location>
    <ligand>
        <name>ATP</name>
        <dbReference type="ChEBI" id="CHEBI:30616"/>
    </ligand>
</feature>
<proteinExistence type="inferred from homology"/>
<accession>Q1R8W9</accession>
<organism>
    <name type="scientific">Escherichia coli (strain UTI89 / UPEC)</name>
    <dbReference type="NCBI Taxonomy" id="364106"/>
    <lineage>
        <taxon>Bacteria</taxon>
        <taxon>Pseudomonadati</taxon>
        <taxon>Pseudomonadota</taxon>
        <taxon>Gammaproteobacteria</taxon>
        <taxon>Enterobacterales</taxon>
        <taxon>Enterobacteriaceae</taxon>
        <taxon>Escherichia</taxon>
    </lineage>
</organism>
<sequence length="471" mass="53811">MKIKTRFAPSPTGYLHVGGARTALYSWLFARNHGGEFVLRIEDTDLERSTPEAIEAIMDGMNWLSLEWDEGPYYQTKRFDRYNAVIDQMLEEGTAYKCYCSKERLEALREEQMAKGEKPRYDGRCRHSHEHHADDEPCVVRFANPQEGSVVFDDQIRGPIEFSNQELDDLIIRRTDGSPTYNFCVVVDDWDMEITHVIRGEDHINNTPRQINILKALKAPVPVYAHVSMINGDDGKKLSKRHGAVSVMQYRDDGYLPEALLNYLVRLGWSHGDQEIFTREEMIKYFTLNAVSKSASAFNTDKLLWLNHHYINALPPEYVATHLQWHIEQENIDTRNGPQLADLVKLLGERCKTLKEMAQSCRYFYEDFAEFDADAAKKHLRPVARQPLEVVRDKLTAITDWTAENVHHAIQATADELEVGMGKVGMPLRVAVTGAGQSPALDVTVHAIGKTRSIERINKALAFIAERENQH</sequence>
<gene>
    <name evidence="1" type="primary">gltX</name>
    <name type="ordered locus">UTI89_C2731</name>
</gene>
<protein>
    <recommendedName>
        <fullName evidence="1">Glutamate--tRNA ligase</fullName>
        <ecNumber evidence="1">6.1.1.17</ecNumber>
    </recommendedName>
    <alternativeName>
        <fullName evidence="1">Glutamyl-tRNA synthetase</fullName>
        <shortName evidence="1">GluRS</shortName>
    </alternativeName>
</protein>